<evidence type="ECO:0000255" key="1">
    <source>
        <dbReference type="HAMAP-Rule" id="MF_01007"/>
    </source>
</evidence>
<sequence length="310" mass="35003">MFKHVTVLLEETVDGLDIKPNGTYVDCTLGGGGHSSYLLSQLTEGGKLIAFDQDEIAIQNAKDKFSSYGEQFIAVKSNFRYLSEKLHELGITEVDGILFDLGVSSPQLDTPERGFSYHHDAPLDMRMDQEAPLTAYDVVNNWSYEQLVRIFFQYGEEKFSKQIARKIEAYREKKKIETTGELVELIKEGIPAPARRTGGHPAKRVFQAIRIAVNDELKVFEEALEAAIEIVKPGGRISVITFHSLEDRICKTTFKRNSTTPELPPGLPIIPEEFKPKLKLITRKPILPSDVELEENNRARSAKLRIAEKR</sequence>
<proteinExistence type="inferred from homology"/>
<accession>A7GRP4</accession>
<gene>
    <name evidence="1" type="primary">rsmH</name>
    <name type="synonym">mraW</name>
    <name type="ordered locus">Bcer98_2568</name>
</gene>
<reference key="1">
    <citation type="journal article" date="2008" name="Chem. Biol. Interact.">
        <title>Extending the Bacillus cereus group genomics to putative food-borne pathogens of different toxicity.</title>
        <authorList>
            <person name="Lapidus A."/>
            <person name="Goltsman E."/>
            <person name="Auger S."/>
            <person name="Galleron N."/>
            <person name="Segurens B."/>
            <person name="Dossat C."/>
            <person name="Land M.L."/>
            <person name="Broussolle V."/>
            <person name="Brillard J."/>
            <person name="Guinebretiere M.-H."/>
            <person name="Sanchis V."/>
            <person name="Nguen-the C."/>
            <person name="Lereclus D."/>
            <person name="Richardson P."/>
            <person name="Wincker P."/>
            <person name="Weissenbach J."/>
            <person name="Ehrlich S.D."/>
            <person name="Sorokin A."/>
        </authorList>
    </citation>
    <scope>NUCLEOTIDE SEQUENCE [LARGE SCALE GENOMIC DNA]</scope>
    <source>
        <strain>DSM 22905 / CIP 110041 / 391-98 / NVH 391-98</strain>
    </source>
</reference>
<dbReference type="EC" id="2.1.1.199" evidence="1"/>
<dbReference type="EMBL" id="CP000764">
    <property type="protein sequence ID" value="ABS22802.1"/>
    <property type="molecule type" value="Genomic_DNA"/>
</dbReference>
<dbReference type="RefSeq" id="WP_012095009.1">
    <property type="nucleotide sequence ID" value="NC_009674.1"/>
</dbReference>
<dbReference type="SMR" id="A7GRP4"/>
<dbReference type="STRING" id="315749.Bcer98_2568"/>
<dbReference type="GeneID" id="33897821"/>
<dbReference type="KEGG" id="bcy:Bcer98_2568"/>
<dbReference type="eggNOG" id="COG0275">
    <property type="taxonomic scope" value="Bacteria"/>
</dbReference>
<dbReference type="HOGENOM" id="CLU_038422_2_0_9"/>
<dbReference type="OrthoDB" id="9806637at2"/>
<dbReference type="Proteomes" id="UP000002300">
    <property type="component" value="Chromosome"/>
</dbReference>
<dbReference type="GO" id="GO:0005737">
    <property type="term" value="C:cytoplasm"/>
    <property type="evidence" value="ECO:0007669"/>
    <property type="project" value="UniProtKB-SubCell"/>
</dbReference>
<dbReference type="GO" id="GO:0071424">
    <property type="term" value="F:rRNA (cytosine-N4-)-methyltransferase activity"/>
    <property type="evidence" value="ECO:0007669"/>
    <property type="project" value="UniProtKB-UniRule"/>
</dbReference>
<dbReference type="GO" id="GO:0070475">
    <property type="term" value="P:rRNA base methylation"/>
    <property type="evidence" value="ECO:0007669"/>
    <property type="project" value="UniProtKB-UniRule"/>
</dbReference>
<dbReference type="FunFam" id="1.10.150.170:FF:000001">
    <property type="entry name" value="Ribosomal RNA small subunit methyltransferase H"/>
    <property type="match status" value="1"/>
</dbReference>
<dbReference type="Gene3D" id="1.10.150.170">
    <property type="entry name" value="Putative methyltransferase TM0872, insert domain"/>
    <property type="match status" value="1"/>
</dbReference>
<dbReference type="Gene3D" id="3.40.50.150">
    <property type="entry name" value="Vaccinia Virus protein VP39"/>
    <property type="match status" value="1"/>
</dbReference>
<dbReference type="HAMAP" id="MF_01007">
    <property type="entry name" value="16SrRNA_methyltr_H"/>
    <property type="match status" value="1"/>
</dbReference>
<dbReference type="InterPro" id="IPR002903">
    <property type="entry name" value="RsmH"/>
</dbReference>
<dbReference type="InterPro" id="IPR023397">
    <property type="entry name" value="SAM-dep_MeTrfase_MraW_recog"/>
</dbReference>
<dbReference type="InterPro" id="IPR029063">
    <property type="entry name" value="SAM-dependent_MTases_sf"/>
</dbReference>
<dbReference type="NCBIfam" id="TIGR00006">
    <property type="entry name" value="16S rRNA (cytosine(1402)-N(4))-methyltransferase RsmH"/>
    <property type="match status" value="1"/>
</dbReference>
<dbReference type="PANTHER" id="PTHR11265:SF0">
    <property type="entry name" value="12S RRNA N4-METHYLCYTIDINE METHYLTRANSFERASE"/>
    <property type="match status" value="1"/>
</dbReference>
<dbReference type="PANTHER" id="PTHR11265">
    <property type="entry name" value="S-ADENOSYL-METHYLTRANSFERASE MRAW"/>
    <property type="match status" value="1"/>
</dbReference>
<dbReference type="Pfam" id="PF01795">
    <property type="entry name" value="Methyltransf_5"/>
    <property type="match status" value="1"/>
</dbReference>
<dbReference type="PIRSF" id="PIRSF004486">
    <property type="entry name" value="MraW"/>
    <property type="match status" value="1"/>
</dbReference>
<dbReference type="SUPFAM" id="SSF81799">
    <property type="entry name" value="Putative methyltransferase TM0872, insert domain"/>
    <property type="match status" value="1"/>
</dbReference>
<dbReference type="SUPFAM" id="SSF53335">
    <property type="entry name" value="S-adenosyl-L-methionine-dependent methyltransferases"/>
    <property type="match status" value="1"/>
</dbReference>
<organism>
    <name type="scientific">Bacillus cytotoxicus (strain DSM 22905 / CIP 110041 / 391-98 / NVH 391-98)</name>
    <dbReference type="NCBI Taxonomy" id="315749"/>
    <lineage>
        <taxon>Bacteria</taxon>
        <taxon>Bacillati</taxon>
        <taxon>Bacillota</taxon>
        <taxon>Bacilli</taxon>
        <taxon>Bacillales</taxon>
        <taxon>Bacillaceae</taxon>
        <taxon>Bacillus</taxon>
        <taxon>Bacillus cereus group</taxon>
    </lineage>
</organism>
<name>RSMH_BACCN</name>
<feature type="chain" id="PRO_0000386734" description="Ribosomal RNA small subunit methyltransferase H">
    <location>
        <begin position="1"/>
        <end position="310"/>
    </location>
</feature>
<feature type="binding site" evidence="1">
    <location>
        <begin position="32"/>
        <end position="34"/>
    </location>
    <ligand>
        <name>S-adenosyl-L-methionine</name>
        <dbReference type="ChEBI" id="CHEBI:59789"/>
    </ligand>
</feature>
<feature type="binding site" evidence="1">
    <location>
        <position position="52"/>
    </location>
    <ligand>
        <name>S-adenosyl-L-methionine</name>
        <dbReference type="ChEBI" id="CHEBI:59789"/>
    </ligand>
</feature>
<feature type="binding site" evidence="1">
    <location>
        <position position="79"/>
    </location>
    <ligand>
        <name>S-adenosyl-L-methionine</name>
        <dbReference type="ChEBI" id="CHEBI:59789"/>
    </ligand>
</feature>
<feature type="binding site" evidence="1">
    <location>
        <position position="100"/>
    </location>
    <ligand>
        <name>S-adenosyl-L-methionine</name>
        <dbReference type="ChEBI" id="CHEBI:59789"/>
    </ligand>
</feature>
<feature type="binding site" evidence="1">
    <location>
        <position position="107"/>
    </location>
    <ligand>
        <name>S-adenosyl-L-methionine</name>
        <dbReference type="ChEBI" id="CHEBI:59789"/>
    </ligand>
</feature>
<protein>
    <recommendedName>
        <fullName evidence="1">Ribosomal RNA small subunit methyltransferase H</fullName>
        <ecNumber evidence="1">2.1.1.199</ecNumber>
    </recommendedName>
    <alternativeName>
        <fullName evidence="1">16S rRNA m(4)C1402 methyltransferase</fullName>
    </alternativeName>
    <alternativeName>
        <fullName evidence="1">rRNA (cytosine-N(4)-)-methyltransferase RsmH</fullName>
    </alternativeName>
</protein>
<keyword id="KW-0963">Cytoplasm</keyword>
<keyword id="KW-0489">Methyltransferase</keyword>
<keyword id="KW-0698">rRNA processing</keyword>
<keyword id="KW-0949">S-adenosyl-L-methionine</keyword>
<keyword id="KW-0808">Transferase</keyword>
<comment type="function">
    <text evidence="1">Specifically methylates the N4 position of cytidine in position 1402 (C1402) of 16S rRNA.</text>
</comment>
<comment type="catalytic activity">
    <reaction evidence="1">
        <text>cytidine(1402) in 16S rRNA + S-adenosyl-L-methionine = N(4)-methylcytidine(1402) in 16S rRNA + S-adenosyl-L-homocysteine + H(+)</text>
        <dbReference type="Rhea" id="RHEA:42928"/>
        <dbReference type="Rhea" id="RHEA-COMP:10286"/>
        <dbReference type="Rhea" id="RHEA-COMP:10287"/>
        <dbReference type="ChEBI" id="CHEBI:15378"/>
        <dbReference type="ChEBI" id="CHEBI:57856"/>
        <dbReference type="ChEBI" id="CHEBI:59789"/>
        <dbReference type="ChEBI" id="CHEBI:74506"/>
        <dbReference type="ChEBI" id="CHEBI:82748"/>
        <dbReference type="EC" id="2.1.1.199"/>
    </reaction>
</comment>
<comment type="subcellular location">
    <subcellularLocation>
        <location evidence="1">Cytoplasm</location>
    </subcellularLocation>
</comment>
<comment type="similarity">
    <text evidence="1">Belongs to the methyltransferase superfamily. RsmH family.</text>
</comment>